<keyword id="KW-1003">Cell membrane</keyword>
<keyword id="KW-0325">Glycoprotein</keyword>
<keyword id="KW-0406">Ion transport</keyword>
<keyword id="KW-0472">Membrane</keyword>
<keyword id="KW-1185">Reference proteome</keyword>
<keyword id="KW-0812">Transmembrane</keyword>
<keyword id="KW-1133">Transmembrane helix</keyword>
<keyword id="KW-0813">Transport</keyword>
<gene>
    <name type="primary">SLC22A2</name>
    <name evidence="1" type="synonym">OCT2</name>
</gene>
<accession>Q8MJI6</accession>
<name>S22A2_RABIT</name>
<proteinExistence type="evidence at protein level"/>
<evidence type="ECO:0000250" key="1">
    <source>
        <dbReference type="UniProtKB" id="O15244"/>
    </source>
</evidence>
<evidence type="ECO:0000250" key="2">
    <source>
        <dbReference type="UniProtKB" id="O70577"/>
    </source>
</evidence>
<evidence type="ECO:0000250" key="3">
    <source>
        <dbReference type="UniProtKB" id="Q9R0W2"/>
    </source>
</evidence>
<evidence type="ECO:0000255" key="4"/>
<evidence type="ECO:0000269" key="5">
    <source>
    </source>
</evidence>
<evidence type="ECO:0000269" key="6">
    <source>
    </source>
</evidence>
<evidence type="ECO:0000305" key="7"/>
<organism>
    <name type="scientific">Oryctolagus cuniculus</name>
    <name type="common">Rabbit</name>
    <dbReference type="NCBI Taxonomy" id="9986"/>
    <lineage>
        <taxon>Eukaryota</taxon>
        <taxon>Metazoa</taxon>
        <taxon>Chordata</taxon>
        <taxon>Craniata</taxon>
        <taxon>Vertebrata</taxon>
        <taxon>Euteleostomi</taxon>
        <taxon>Mammalia</taxon>
        <taxon>Eutheria</taxon>
        <taxon>Euarchontoglires</taxon>
        <taxon>Glires</taxon>
        <taxon>Lagomorpha</taxon>
        <taxon>Leporidae</taxon>
        <taxon>Oryctolagus</taxon>
    </lineage>
</organism>
<sequence length="554" mass="61576">MPTVDDILEQVGHFHFFQKQTFFLLALISAAFTPIYVGIVFLGFTPDHRCRSPGVAELSQRCGWSPGEELNYTVPGLGAADGAFARQCMRYEVDWNQSSPGCVDPLASLAPNRSHLPLGPCQHGWVYDTPGSSIVTEFNLVCARSWMLDLFQSAVNIGFFIGSVGIGYLADRFGRKLCLLVTILINAAAGVLMAVSPNYTWMLIFRLIQGLVSKAGWLIGYILITEFVGLNYRRTVGILYQVAFTVGLLVLAGVAYALPRWRWLQLTVTLPYFCFLLYYWCIPESPRWLISQNKNAKAMRIMEHIAKKNGKSLPVSLQSLRAAEDVGEKLNPSFLDLVRTPQIRKHTCILMYNWFTSSVLYQGLIMHLGLAGGDIYLDFFYSALVEFPAAFLIIATIDRVGRRYPWAVSNMVAGAACLASVFVPDDLQGLRITVACLGRMGITMAYEMVCLVNAELYPTFIRNLGVLVCSSLCDVGGIVTPFLVYRLTAIWLQLPLVVFAVVGLVAGGLVLMLPETKGRTLPETIEEAENLQRPRKNREKVIYVHVRKADGPLT</sequence>
<reference key="1">
    <citation type="journal article" date="2002" name="Am. J. Physiol.">
        <title>Molecular cloning of rabbit organic cation transporter rbOCT2 and functional comparisons with rbOCT1.</title>
        <authorList>
            <person name="Zhang X."/>
            <person name="Evans K.K."/>
            <person name="Wright S.H."/>
        </authorList>
    </citation>
    <scope>NUCLEOTIDE SEQUENCE [MRNA]</scope>
    <scope>TISSUE SPECIFICITY</scope>
</reference>
<reference key="2">
    <citation type="journal article" date="2006" name="Am. J. Physiol.">
        <title>Functional influence of N-glycosylation in OCT2-mediated tetraethylammonium transport.</title>
        <authorList>
            <person name="Pelis R.M."/>
            <person name="Suhre W.M."/>
            <person name="Wright S.H."/>
        </authorList>
    </citation>
    <scope>MUTAGENESIS OF ASN-71; ASN-96 AND ASN-112</scope>
    <scope>GLYCOSYLATION</scope>
    <scope>SUBCELLULAR LOCATION</scope>
</reference>
<dbReference type="EMBL" id="AF458095">
    <property type="protein sequence ID" value="AAM83256.1"/>
    <property type="molecule type" value="mRNA"/>
</dbReference>
<dbReference type="RefSeq" id="NP_001075584.1">
    <property type="nucleotide sequence ID" value="NM_001082115.1"/>
</dbReference>
<dbReference type="SMR" id="Q8MJI6"/>
<dbReference type="FunCoup" id="Q8MJI6">
    <property type="interactions" value="32"/>
</dbReference>
<dbReference type="STRING" id="9986.ENSOCUP00000048738"/>
<dbReference type="GlyCosmos" id="Q8MJI6">
    <property type="glycosylation" value="2 sites, No reported glycans"/>
</dbReference>
<dbReference type="PaxDb" id="9986-ENSOCUP00000002196"/>
<dbReference type="GeneID" id="100008831"/>
<dbReference type="KEGG" id="ocu:100008831"/>
<dbReference type="CTD" id="6582"/>
<dbReference type="eggNOG" id="KOG0255">
    <property type="taxonomic scope" value="Eukaryota"/>
</dbReference>
<dbReference type="InParanoid" id="Q8MJI6"/>
<dbReference type="OrthoDB" id="5141738at2759"/>
<dbReference type="Proteomes" id="UP000001811">
    <property type="component" value="Unplaced"/>
</dbReference>
<dbReference type="GO" id="GO:0016324">
    <property type="term" value="C:apical plasma membrane"/>
    <property type="evidence" value="ECO:0000250"/>
    <property type="project" value="UniProtKB"/>
</dbReference>
<dbReference type="GO" id="GO:0009925">
    <property type="term" value="C:basal plasma membrane"/>
    <property type="evidence" value="ECO:0000250"/>
    <property type="project" value="UniProtKB"/>
</dbReference>
<dbReference type="GO" id="GO:0016323">
    <property type="term" value="C:basolateral plasma membrane"/>
    <property type="evidence" value="ECO:0000250"/>
    <property type="project" value="UniProtKB"/>
</dbReference>
<dbReference type="GO" id="GO:0005277">
    <property type="term" value="F:acetylcholine transmembrane transporter activity"/>
    <property type="evidence" value="ECO:0000250"/>
    <property type="project" value="UniProtKB"/>
</dbReference>
<dbReference type="GO" id="GO:0008504">
    <property type="term" value="F:monoamine transmembrane transporter activity"/>
    <property type="evidence" value="ECO:0000250"/>
    <property type="project" value="UniProtKB"/>
</dbReference>
<dbReference type="GO" id="GO:0005326">
    <property type="term" value="F:neurotransmitter transmembrane transporter activity"/>
    <property type="evidence" value="ECO:0000250"/>
    <property type="project" value="UniProtKB"/>
</dbReference>
<dbReference type="GO" id="GO:0008514">
    <property type="term" value="F:organic anion transmembrane transporter activity"/>
    <property type="evidence" value="ECO:0000250"/>
    <property type="project" value="UniProtKB"/>
</dbReference>
<dbReference type="GO" id="GO:0015101">
    <property type="term" value="F:organic cation transmembrane transporter activity"/>
    <property type="evidence" value="ECO:0000250"/>
    <property type="project" value="UniProtKB"/>
</dbReference>
<dbReference type="GO" id="GO:0015132">
    <property type="term" value="F:prostaglandin transmembrane transporter activity"/>
    <property type="evidence" value="ECO:0000250"/>
    <property type="project" value="UniProtKB"/>
</dbReference>
<dbReference type="GO" id="GO:0015489">
    <property type="term" value="F:putrescine transmembrane transporter activity"/>
    <property type="evidence" value="ECO:0000250"/>
    <property type="project" value="UniProtKB"/>
</dbReference>
<dbReference type="GO" id="GO:0015606">
    <property type="term" value="F:spermidine transmembrane transporter activity"/>
    <property type="evidence" value="ECO:0000250"/>
    <property type="project" value="UniProtKB"/>
</dbReference>
<dbReference type="GO" id="GO:0015234">
    <property type="term" value="F:thiamine transmembrane transporter activity"/>
    <property type="evidence" value="ECO:0000250"/>
    <property type="project" value="UniProtKB"/>
</dbReference>
<dbReference type="GO" id="GO:0015870">
    <property type="term" value="P:acetylcholine transport"/>
    <property type="evidence" value="ECO:0000250"/>
    <property type="project" value="UniProtKB"/>
</dbReference>
<dbReference type="GO" id="GO:0015872">
    <property type="term" value="P:dopamine transport"/>
    <property type="evidence" value="ECO:0000250"/>
    <property type="project" value="UniProtKB"/>
</dbReference>
<dbReference type="GO" id="GO:0048241">
    <property type="term" value="P:epinephrine transport"/>
    <property type="evidence" value="ECO:0000250"/>
    <property type="project" value="UniProtKB"/>
</dbReference>
<dbReference type="GO" id="GO:0006811">
    <property type="term" value="P:monoatomic ion transport"/>
    <property type="evidence" value="ECO:0007669"/>
    <property type="project" value="UniProtKB-KW"/>
</dbReference>
<dbReference type="GO" id="GO:0015874">
    <property type="term" value="P:norepinephrine transport"/>
    <property type="evidence" value="ECO:0000250"/>
    <property type="project" value="UniProtKB"/>
</dbReference>
<dbReference type="GO" id="GO:0015732">
    <property type="term" value="P:prostaglandin transport"/>
    <property type="evidence" value="ECO:0000250"/>
    <property type="project" value="UniProtKB"/>
</dbReference>
<dbReference type="GO" id="GO:0015847">
    <property type="term" value="P:putrescine transport"/>
    <property type="evidence" value="ECO:0000250"/>
    <property type="project" value="UniProtKB"/>
</dbReference>
<dbReference type="GO" id="GO:0006837">
    <property type="term" value="P:serotonin transport"/>
    <property type="evidence" value="ECO:0000250"/>
    <property type="project" value="UniProtKB"/>
</dbReference>
<dbReference type="GO" id="GO:0015848">
    <property type="term" value="P:spermidine transport"/>
    <property type="evidence" value="ECO:0000250"/>
    <property type="project" value="UniProtKB"/>
</dbReference>
<dbReference type="GO" id="GO:0071934">
    <property type="term" value="P:thiamine transmembrane transport"/>
    <property type="evidence" value="ECO:0000250"/>
    <property type="project" value="UniProtKB"/>
</dbReference>
<dbReference type="CDD" id="cd17379">
    <property type="entry name" value="MFS_SLC22A1_2_3"/>
    <property type="match status" value="1"/>
</dbReference>
<dbReference type="FunFam" id="1.20.1250.20:FF:000148">
    <property type="entry name" value="Solute carrier family 22 member 2"/>
    <property type="match status" value="1"/>
</dbReference>
<dbReference type="Gene3D" id="1.20.1250.20">
    <property type="entry name" value="MFS general substrate transporter like domains"/>
    <property type="match status" value="1"/>
</dbReference>
<dbReference type="InterPro" id="IPR020846">
    <property type="entry name" value="MFS_dom"/>
</dbReference>
<dbReference type="InterPro" id="IPR005828">
    <property type="entry name" value="MFS_sugar_transport-like"/>
</dbReference>
<dbReference type="InterPro" id="IPR036259">
    <property type="entry name" value="MFS_trans_sf"/>
</dbReference>
<dbReference type="InterPro" id="IPR004749">
    <property type="entry name" value="Orgcat_transp/SVOP"/>
</dbReference>
<dbReference type="InterPro" id="IPR005829">
    <property type="entry name" value="Sugar_transporter_CS"/>
</dbReference>
<dbReference type="NCBIfam" id="TIGR00898">
    <property type="entry name" value="2A0119"/>
    <property type="match status" value="1"/>
</dbReference>
<dbReference type="PANTHER" id="PTHR24064">
    <property type="entry name" value="SOLUTE CARRIER FAMILY 22 MEMBER"/>
    <property type="match status" value="1"/>
</dbReference>
<dbReference type="Pfam" id="PF00083">
    <property type="entry name" value="Sugar_tr"/>
    <property type="match status" value="1"/>
</dbReference>
<dbReference type="SUPFAM" id="SSF103473">
    <property type="entry name" value="MFS general substrate transporter"/>
    <property type="match status" value="1"/>
</dbReference>
<dbReference type="PROSITE" id="PS50850">
    <property type="entry name" value="MFS"/>
    <property type="match status" value="1"/>
</dbReference>
<dbReference type="PROSITE" id="PS00216">
    <property type="entry name" value="SUGAR_TRANSPORT_1"/>
    <property type="match status" value="2"/>
</dbReference>
<protein>
    <recommendedName>
        <fullName evidence="1">Solute carrier family 22 member 2</fullName>
    </recommendedName>
    <alternativeName>
        <fullName evidence="1">Organic cation transporter 2</fullName>
    </alternativeName>
</protein>
<comment type="function">
    <text evidence="1 3">Electrogenic voltage-dependent transporter that mediates the transport of a variety of organic cations such as endogenous bioactive amines, cationic drugs and xenobiotics. Functions as a Na(+)-independent, bidirectional uniporter. Cation cellular uptake or release is driven by the electrochemical potential, i.e. membrane potential and concentration gradient (By similarity). However, may also engage electroneutral cation exchange when saturating concentrations of cation substrates are reached (By similarity). Predominantly expressed at the basolateral membrane of hepatocytes and proximal tubules and involved in the uptake and disposition of cationic compounds by hepatic and renal clearance from the blood flow. Implicated in monoamine neurotransmitters uptake such as histamine, dopamine, adrenaline/epinephrine, noradrenaline/norepinephrine, serotonin and tyramine, thereby supporting a physiological role in the central nervous system by regulating interstitial concentrations of neurotransmitters. Also capable of transporting dopaminergic neuromodulators cyclo(his-pro), salsolinol and N-methyl-salsolinol, thereby involved in the maintenance of dopaminergic cell integrity in the central nervous system. Mediates the bidirectional transport of acetylcholine (ACh) at the apical membrane of ciliated cell in airway epithelium, thereby playing a role in luminal release of ACh from bronchial epithelium. Also transports guanidine and endogenous monoamines such as vitamin B1/thiamine, creatinine and N-1-methylnicotinamide (NMN). Mediates the uptake and efflux of quaternary ammonium compound choline. Mediates the bidirectional transport of polyamine agmatine and the uptake of polyamines putrescine and spermidine. Able to transport non-amine endogenous compounds such as prostaglandin E2 (PGE2) and prostaglandin F2-alpha (PGF2-alpha). Also involved in the uptake of xenobiotic 4-(4-(dimethylamino)styryl)-N-methylpyridinium (ASP). May contribute to regulate the transport of organic compounds in testis across the blood-testis-barrier (By similarity).</text>
</comment>
<comment type="catalytic activity">
    <reaction evidence="1">
        <text>(R)-noradrenaline(out) = (R)-noradrenaline(in)</text>
        <dbReference type="Rhea" id="RHEA:73871"/>
        <dbReference type="ChEBI" id="CHEBI:72587"/>
    </reaction>
</comment>
<comment type="catalytic activity">
    <reaction evidence="3">
        <text>(R)-adrenaline(out) = (R)-adrenaline(in)</text>
        <dbReference type="Rhea" id="RHEA:73875"/>
        <dbReference type="ChEBI" id="CHEBI:71406"/>
    </reaction>
</comment>
<comment type="catalytic activity">
    <reaction evidence="1">
        <text>serotonin(out) = serotonin(in)</text>
        <dbReference type="Rhea" id="RHEA:73867"/>
        <dbReference type="ChEBI" id="CHEBI:350546"/>
    </reaction>
</comment>
<comment type="catalytic activity">
    <reaction evidence="1">
        <text>dopamine(out) = dopamine(in)</text>
        <dbReference type="Rhea" id="RHEA:73863"/>
        <dbReference type="ChEBI" id="CHEBI:59905"/>
    </reaction>
</comment>
<comment type="catalytic activity">
    <reaction evidence="1">
        <text>histamine(out) = histamine(in)</text>
        <dbReference type="Rhea" id="RHEA:73879"/>
        <dbReference type="ChEBI" id="CHEBI:58432"/>
    </reaction>
</comment>
<comment type="catalytic activity">
    <reaction evidence="1">
        <text>thiamine(in) = thiamine(out)</text>
        <dbReference type="Rhea" id="RHEA:34919"/>
        <dbReference type="ChEBI" id="CHEBI:18385"/>
    </reaction>
</comment>
<comment type="catalytic activity">
    <reaction evidence="1">
        <text>creatinine(in) = creatinine(out)</text>
        <dbReference type="Rhea" id="RHEA:74539"/>
        <dbReference type="ChEBI" id="CHEBI:16737"/>
    </reaction>
</comment>
<comment type="catalytic activity">
    <reaction evidence="1">
        <text>1-methylnicotinamide(out) = 1-methylnicotinamide(in)</text>
        <dbReference type="Rhea" id="RHEA:73859"/>
        <dbReference type="ChEBI" id="CHEBI:16797"/>
    </reaction>
</comment>
<comment type="catalytic activity">
    <reaction evidence="1">
        <text>guanidine(out) = guanidine(in)</text>
        <dbReference type="Rhea" id="RHEA:73883"/>
        <dbReference type="ChEBI" id="CHEBI:30087"/>
    </reaction>
</comment>
<comment type="catalytic activity">
    <reaction evidence="1">
        <text>choline(out) = choline(in)</text>
        <dbReference type="Rhea" id="RHEA:32751"/>
        <dbReference type="ChEBI" id="CHEBI:15354"/>
    </reaction>
</comment>
<comment type="catalytic activity">
    <reaction evidence="1">
        <text>agmatine(out) = agmatine(in)</text>
        <dbReference type="Rhea" id="RHEA:72131"/>
        <dbReference type="ChEBI" id="CHEBI:58145"/>
    </reaction>
    <physiologicalReaction direction="left-to-right" evidence="1">
        <dbReference type="Rhea" id="RHEA:72132"/>
    </physiologicalReaction>
    <physiologicalReaction direction="right-to-left" evidence="1">
        <dbReference type="Rhea" id="RHEA:72133"/>
    </physiologicalReaction>
</comment>
<comment type="catalytic activity">
    <reaction evidence="1">
        <text>putrescine(out) = putrescine(in)</text>
        <dbReference type="Rhea" id="RHEA:72135"/>
        <dbReference type="ChEBI" id="CHEBI:326268"/>
    </reaction>
</comment>
<comment type="catalytic activity">
    <reaction evidence="2">
        <text>spermidine(in) = spermidine(out)</text>
        <dbReference type="Rhea" id="RHEA:35039"/>
        <dbReference type="ChEBI" id="CHEBI:57834"/>
    </reaction>
</comment>
<comment type="catalytic activity">
    <reaction evidence="1">
        <text>tyramine(in) = tyramine(out)</text>
        <dbReference type="Rhea" id="RHEA:74783"/>
        <dbReference type="ChEBI" id="CHEBI:327995"/>
    </reaction>
</comment>
<comment type="catalytic activity">
    <reaction evidence="1">
        <text>L-histidyl-L-proline diketopiperazine(in) = L-histidyl-L-proline diketopiperazine(out)</text>
        <dbReference type="Rhea" id="RHEA:74787"/>
        <dbReference type="ChEBI" id="CHEBI:90039"/>
    </reaction>
</comment>
<comment type="catalytic activity">
    <reaction evidence="1">
        <text>(R)-salsolinol(in) = (R)-salsolinol(out)</text>
        <dbReference type="Rhea" id="RHEA:74791"/>
        <dbReference type="ChEBI" id="CHEBI:194082"/>
    </reaction>
</comment>
<comment type="catalytic activity">
    <reaction evidence="1">
        <text>N-methyl-(R)-salsolinol(in) = N-methyl-(R)-salsolinol(out)</text>
        <dbReference type="Rhea" id="RHEA:74795"/>
        <dbReference type="ChEBI" id="CHEBI:194083"/>
    </reaction>
</comment>
<comment type="catalytic activity">
    <reaction evidence="1">
        <text>acetylcholine(in) = acetylcholine(out)</text>
        <dbReference type="Rhea" id="RHEA:74663"/>
        <dbReference type="ChEBI" id="CHEBI:15355"/>
    </reaction>
</comment>
<comment type="catalytic activity">
    <reaction evidence="1">
        <text>prostaglandin F2alpha(out) = prostaglandin F2alpha(in)</text>
        <dbReference type="Rhea" id="RHEA:50988"/>
        <dbReference type="ChEBI" id="CHEBI:57404"/>
    </reaction>
</comment>
<comment type="catalytic activity">
    <reaction evidence="1">
        <text>prostaglandin E2(out) = prostaglandin E2(in)</text>
        <dbReference type="Rhea" id="RHEA:50984"/>
        <dbReference type="ChEBI" id="CHEBI:606564"/>
    </reaction>
</comment>
<comment type="activity regulation">
    <text evidence="1">Tyrosine phosphorylation of the transporter leads to activation of the transport activity. Inhibited by cGMP, most likely through a cGMP-binding protein that interacts with OCT2.</text>
</comment>
<comment type="subcellular location">
    <subcellularLocation>
        <location evidence="3">Basolateral cell membrane</location>
        <topology evidence="7">Multi-pass membrane protein</topology>
    </subcellularLocation>
    <subcellularLocation>
        <location evidence="1">Basal cell membrane</location>
        <topology evidence="7">Multi-pass membrane protein</topology>
    </subcellularLocation>
</comment>
<comment type="tissue specificity">
    <text evidence="5">Expressed in kidney.</text>
</comment>
<comment type="induction">
    <text>May be down-regulated in diabetic patients.</text>
</comment>
<comment type="domain">
    <text evidence="1">Contains one proline-rich sequence (Pro-Glu-Ser-Pro-Arg) that may be involved in tyrosine-protein kinase YES1 binding and is requirered for the induction of transport activity.</text>
</comment>
<comment type="PTM">
    <text evidence="1">Tyrosine phosphorylated.</text>
</comment>
<comment type="miscellaneous">
    <text evidence="1 3">Mediates the renal secretion of many clinically used cationic drugs. Transports drugs such as diabetes treatment medicine metformin and neurotoxins 1-methyl-4-phenylpyridinium (MPP(+)), famotidine, ranitidine, amantadine, acriflavine, amiloride, memantine, cimetidine, cisplatin, oxaliplatin, platinum-based drugs cisplatin and oxaliplatin, 3'-azido-3'-deoxythymidine (AZT) and tetraethylammonium (TEA). Mediates the bidirectional transport of MPP(+). Metformin competitively inhibits OCT1-mediated thiamine uptake, leading to a decrease in hepatic steatosis. Plays a predominant role in the anticancer activity of cisplatin and oxaliplatin and may contribute to antitumor specificity (By similarity). Involved in cisplatin-induced nephrotoxicity (By similarity).</text>
</comment>
<comment type="similarity">
    <text evidence="7">Belongs to the major facilitator (TC 2.A.1) superfamily. Organic cation transporter (TC 2.A.1.19) family.</text>
</comment>
<comment type="caution">
    <text evidence="1">While most authors have deduced a localization at the basolateral membrane of proximal tubules, other studies demonstrated a localization to the luminal membrane in the distal tubule.</text>
</comment>
<feature type="chain" id="PRO_0000320961" description="Solute carrier family 22 member 2">
    <location>
        <begin position="1"/>
        <end position="554"/>
    </location>
</feature>
<feature type="topological domain" description="Cytoplasmic" evidence="4">
    <location>
        <begin position="1"/>
        <end position="21"/>
    </location>
</feature>
<feature type="transmembrane region" description="Helical" evidence="4">
    <location>
        <begin position="22"/>
        <end position="42"/>
    </location>
</feature>
<feature type="topological domain" description="Extracellular" evidence="4">
    <location>
        <begin position="43"/>
        <end position="149"/>
    </location>
</feature>
<feature type="transmembrane region" description="Helical" evidence="4">
    <location>
        <begin position="150"/>
        <end position="170"/>
    </location>
</feature>
<feature type="topological domain" description="Cytoplasmic" evidence="4">
    <location>
        <begin position="171"/>
        <end position="176"/>
    </location>
</feature>
<feature type="transmembrane region" description="Helical" evidence="4">
    <location>
        <begin position="177"/>
        <end position="197"/>
    </location>
</feature>
<feature type="topological domain" description="Extracellular" evidence="4">
    <location>
        <begin position="198"/>
        <end position="209"/>
    </location>
</feature>
<feature type="transmembrane region" description="Helical" evidence="4">
    <location>
        <begin position="210"/>
        <end position="230"/>
    </location>
</feature>
<feature type="topological domain" description="Cytoplasmic" evidence="4">
    <location>
        <begin position="231"/>
        <end position="237"/>
    </location>
</feature>
<feature type="transmembrane region" description="Helical" evidence="4">
    <location>
        <begin position="238"/>
        <end position="258"/>
    </location>
</feature>
<feature type="topological domain" description="Extracellular" evidence="4">
    <location>
        <begin position="259"/>
        <end position="262"/>
    </location>
</feature>
<feature type="transmembrane region" description="Helical" evidence="4">
    <location>
        <begin position="263"/>
        <end position="283"/>
    </location>
</feature>
<feature type="topological domain" description="Cytoplasmic" evidence="4">
    <location>
        <begin position="284"/>
        <end position="348"/>
    </location>
</feature>
<feature type="transmembrane region" description="Helical" evidence="4">
    <location>
        <begin position="349"/>
        <end position="369"/>
    </location>
</feature>
<feature type="topological domain" description="Extracellular" evidence="4">
    <location>
        <begin position="370"/>
        <end position="374"/>
    </location>
</feature>
<feature type="transmembrane region" description="Helical" evidence="4">
    <location>
        <begin position="375"/>
        <end position="395"/>
    </location>
</feature>
<feature type="topological domain" description="Cytoplasmic" evidence="4">
    <location>
        <begin position="396"/>
        <end position="403"/>
    </location>
</feature>
<feature type="transmembrane region" description="Helical" evidence="4">
    <location>
        <begin position="404"/>
        <end position="424"/>
    </location>
</feature>
<feature type="topological domain" description="Extracellular" evidence="4">
    <location>
        <begin position="425"/>
        <end position="427"/>
    </location>
</feature>
<feature type="transmembrane region" description="Helical" evidence="4">
    <location>
        <begin position="428"/>
        <end position="450"/>
    </location>
</feature>
<feature type="topological domain" description="Cytoplasmic" evidence="4">
    <location>
        <begin position="451"/>
        <end position="463"/>
    </location>
</feature>
<feature type="transmembrane region" description="Helical" evidence="4">
    <location>
        <begin position="464"/>
        <end position="484"/>
    </location>
</feature>
<feature type="topological domain" description="Extracellular" evidence="4">
    <location>
        <begin position="485"/>
        <end position="493"/>
    </location>
</feature>
<feature type="transmembrane region" description="Helical" evidence="4">
    <location>
        <begin position="494"/>
        <end position="514"/>
    </location>
</feature>
<feature type="topological domain" description="Cytoplasmic" evidence="4">
    <location>
        <begin position="515"/>
        <end position="554"/>
    </location>
</feature>
<feature type="short sequence motif" description="Proline-rich sequence" evidence="1">
    <location>
        <begin position="283"/>
        <end position="287"/>
    </location>
</feature>
<feature type="site" description="Involved in recognition of organic cations and participates in structural changes that occur during translocation of organic cations" evidence="3">
    <location>
        <position position="450"/>
    </location>
</feature>
<feature type="glycosylation site" description="N-linked (GlcNAc...) asparagine" evidence="4">
    <location>
        <position position="71"/>
    </location>
</feature>
<feature type="glycosylation site" description="N-linked (GlcNAc...) asparagine" evidence="4">
    <location>
        <position position="198"/>
    </location>
</feature>
<feature type="mutagenesis site" description="Higher affinity for TEA. Loss of plasma membrane localization; when associated with Q-76. Loss of plasma membrane localization; when associated with Q-112. Loss of plasma membrane localization; when associated with Q-76 and Q-112." evidence="6">
    <original>N</original>
    <variation>Q</variation>
    <location>
        <position position="71"/>
    </location>
</feature>
<feature type="mutagenesis site" description="Higher affinity for TEA and lower Vmax." evidence="6">
    <original>N</original>
    <variation>Q</variation>
    <location>
        <position position="96"/>
    </location>
</feature>
<feature type="mutagenesis site" description="Higher affinity for TEA, lower Vmax and loss of plasma membrane localization." evidence="6">
    <original>N</original>
    <variation>Q</variation>
    <location>
        <position position="112"/>
    </location>
</feature>